<keyword id="KW-0687">Ribonucleoprotein</keyword>
<keyword id="KW-0689">Ribosomal protein</keyword>
<keyword id="KW-0694">RNA-binding</keyword>
<keyword id="KW-0699">rRNA-binding</keyword>
<name>RS15_RHOE4</name>
<sequence length="89" mass="10373">MALTTEEKKVVLGEYGLHETDTGSPEAQVAMLTKRITDLTEHLKTHKHDHHSRRGLLLMVGRRRRLLKYVAKTDVARYRTLIERLGLRR</sequence>
<feature type="chain" id="PRO_1000214767" description="Small ribosomal subunit protein uS15">
    <location>
        <begin position="1"/>
        <end position="89"/>
    </location>
</feature>
<organism>
    <name type="scientific">Rhodococcus erythropolis (strain PR4 / NBRC 100887)</name>
    <dbReference type="NCBI Taxonomy" id="234621"/>
    <lineage>
        <taxon>Bacteria</taxon>
        <taxon>Bacillati</taxon>
        <taxon>Actinomycetota</taxon>
        <taxon>Actinomycetes</taxon>
        <taxon>Mycobacteriales</taxon>
        <taxon>Nocardiaceae</taxon>
        <taxon>Rhodococcus</taxon>
        <taxon>Rhodococcus erythropolis group</taxon>
    </lineage>
</organism>
<proteinExistence type="inferred from homology"/>
<accession>C0ZYB6</accession>
<protein>
    <recommendedName>
        <fullName evidence="1">Small ribosomal subunit protein uS15</fullName>
    </recommendedName>
    <alternativeName>
        <fullName evidence="2">30S ribosomal protein S15</fullName>
    </alternativeName>
</protein>
<evidence type="ECO:0000255" key="1">
    <source>
        <dbReference type="HAMAP-Rule" id="MF_01343"/>
    </source>
</evidence>
<evidence type="ECO:0000305" key="2"/>
<reference key="1">
    <citation type="submission" date="2005-03" db="EMBL/GenBank/DDBJ databases">
        <title>Comparison of the complete genome sequences of Rhodococcus erythropolis PR4 and Rhodococcus opacus B4.</title>
        <authorList>
            <person name="Takarada H."/>
            <person name="Sekine M."/>
            <person name="Hosoyama A."/>
            <person name="Yamada R."/>
            <person name="Fujisawa T."/>
            <person name="Omata S."/>
            <person name="Shimizu A."/>
            <person name="Tsukatani N."/>
            <person name="Tanikawa S."/>
            <person name="Fujita N."/>
            <person name="Harayama S."/>
        </authorList>
    </citation>
    <scope>NUCLEOTIDE SEQUENCE [LARGE SCALE GENOMIC DNA]</scope>
    <source>
        <strain>PR4 / NBRC 100887</strain>
    </source>
</reference>
<comment type="function">
    <text evidence="1">One of the primary rRNA binding proteins, it binds directly to 16S rRNA where it helps nucleate assembly of the platform of the 30S subunit by binding and bridging several RNA helices of the 16S rRNA.</text>
</comment>
<comment type="function">
    <text evidence="1">Forms an intersubunit bridge (bridge B4) with the 23S rRNA of the 50S subunit in the ribosome.</text>
</comment>
<comment type="subunit">
    <text evidence="1">Part of the 30S ribosomal subunit. Forms a bridge to the 50S subunit in the 70S ribosome, contacting the 23S rRNA.</text>
</comment>
<comment type="similarity">
    <text evidence="1">Belongs to the universal ribosomal protein uS15 family.</text>
</comment>
<dbReference type="EMBL" id="AP008957">
    <property type="protein sequence ID" value="BAH33351.1"/>
    <property type="molecule type" value="Genomic_DNA"/>
</dbReference>
<dbReference type="RefSeq" id="WP_003942254.1">
    <property type="nucleotide sequence ID" value="NC_012490.1"/>
</dbReference>
<dbReference type="SMR" id="C0ZYB6"/>
<dbReference type="GeneID" id="57487375"/>
<dbReference type="KEGG" id="rer:RER_26430"/>
<dbReference type="eggNOG" id="COG0184">
    <property type="taxonomic scope" value="Bacteria"/>
</dbReference>
<dbReference type="HOGENOM" id="CLU_148518_0_0_11"/>
<dbReference type="Proteomes" id="UP000002204">
    <property type="component" value="Chromosome"/>
</dbReference>
<dbReference type="GO" id="GO:0022627">
    <property type="term" value="C:cytosolic small ribosomal subunit"/>
    <property type="evidence" value="ECO:0007669"/>
    <property type="project" value="TreeGrafter"/>
</dbReference>
<dbReference type="GO" id="GO:0019843">
    <property type="term" value="F:rRNA binding"/>
    <property type="evidence" value="ECO:0007669"/>
    <property type="project" value="UniProtKB-UniRule"/>
</dbReference>
<dbReference type="GO" id="GO:0003735">
    <property type="term" value="F:structural constituent of ribosome"/>
    <property type="evidence" value="ECO:0007669"/>
    <property type="project" value="InterPro"/>
</dbReference>
<dbReference type="GO" id="GO:0006412">
    <property type="term" value="P:translation"/>
    <property type="evidence" value="ECO:0007669"/>
    <property type="project" value="UniProtKB-UniRule"/>
</dbReference>
<dbReference type="CDD" id="cd00353">
    <property type="entry name" value="Ribosomal_S15p_S13e"/>
    <property type="match status" value="1"/>
</dbReference>
<dbReference type="FunFam" id="1.10.287.10:FF:000002">
    <property type="entry name" value="30S ribosomal protein S15"/>
    <property type="match status" value="1"/>
</dbReference>
<dbReference type="Gene3D" id="6.10.250.3130">
    <property type="match status" value="1"/>
</dbReference>
<dbReference type="Gene3D" id="1.10.287.10">
    <property type="entry name" value="S15/NS1, RNA-binding"/>
    <property type="match status" value="1"/>
</dbReference>
<dbReference type="HAMAP" id="MF_01343_B">
    <property type="entry name" value="Ribosomal_uS15_B"/>
    <property type="match status" value="1"/>
</dbReference>
<dbReference type="InterPro" id="IPR000589">
    <property type="entry name" value="Ribosomal_uS15"/>
</dbReference>
<dbReference type="InterPro" id="IPR005290">
    <property type="entry name" value="Ribosomal_uS15_bac-type"/>
</dbReference>
<dbReference type="InterPro" id="IPR009068">
    <property type="entry name" value="uS15_NS1_RNA-bd_sf"/>
</dbReference>
<dbReference type="NCBIfam" id="TIGR00952">
    <property type="entry name" value="S15_bact"/>
    <property type="match status" value="1"/>
</dbReference>
<dbReference type="PANTHER" id="PTHR23321">
    <property type="entry name" value="RIBOSOMAL PROTEIN S15, BACTERIAL AND ORGANELLAR"/>
    <property type="match status" value="1"/>
</dbReference>
<dbReference type="PANTHER" id="PTHR23321:SF26">
    <property type="entry name" value="SMALL RIBOSOMAL SUBUNIT PROTEIN US15M"/>
    <property type="match status" value="1"/>
</dbReference>
<dbReference type="Pfam" id="PF00312">
    <property type="entry name" value="Ribosomal_S15"/>
    <property type="match status" value="1"/>
</dbReference>
<dbReference type="SMART" id="SM01387">
    <property type="entry name" value="Ribosomal_S15"/>
    <property type="match status" value="1"/>
</dbReference>
<dbReference type="SUPFAM" id="SSF47060">
    <property type="entry name" value="S15/NS1 RNA-binding domain"/>
    <property type="match status" value="1"/>
</dbReference>
<dbReference type="PROSITE" id="PS00362">
    <property type="entry name" value="RIBOSOMAL_S15"/>
    <property type="match status" value="1"/>
</dbReference>
<gene>
    <name evidence="1" type="primary">rpsO</name>
    <name type="ordered locus">RER_26430</name>
</gene>